<comment type="function">
    <text evidence="1">Protein S19 forms a complex with S13 that binds strongly to the 16S ribosomal RNA.</text>
</comment>
<comment type="subcellular location">
    <subcellularLocation>
        <location>Plastid</location>
        <location>Chloroplast</location>
    </subcellularLocation>
</comment>
<comment type="similarity">
    <text evidence="1">Belongs to the universal ribosomal protein uS19 family.</text>
</comment>
<geneLocation type="chloroplast"/>
<name>RR19_NEPOL</name>
<sequence>MPRSLKKGPFVANHLLRKIEKMNGKGEKHVITTWSRASTIIPIMIGHTIAIHNGKSHLPIFINDRMIGHKLGEFVLTRNYRGHGKTDKKARR</sequence>
<proteinExistence type="inferred from homology"/>
<keyword id="KW-0150">Chloroplast</keyword>
<keyword id="KW-0934">Plastid</keyword>
<keyword id="KW-0687">Ribonucleoprotein</keyword>
<keyword id="KW-0689">Ribosomal protein</keyword>
<keyword id="KW-0694">RNA-binding</keyword>
<keyword id="KW-0699">rRNA-binding</keyword>
<gene>
    <name evidence="1" type="primary">rps19</name>
</gene>
<evidence type="ECO:0000255" key="1">
    <source>
        <dbReference type="HAMAP-Rule" id="MF_00531"/>
    </source>
</evidence>
<evidence type="ECO:0000305" key="2"/>
<feature type="chain" id="PRO_0000129971" description="Small ribosomal subunit protein uS19c">
    <location>
        <begin position="1"/>
        <end position="92"/>
    </location>
</feature>
<protein>
    <recommendedName>
        <fullName evidence="1">Small ribosomal subunit protein uS19c</fullName>
    </recommendedName>
    <alternativeName>
        <fullName evidence="2">30S ribosomal protein S19, chloroplastic</fullName>
    </alternativeName>
</protein>
<dbReference type="EMBL" id="AF137379">
    <property type="protein sequence ID" value="AAD54797.1"/>
    <property type="molecule type" value="Genomic_DNA"/>
</dbReference>
<dbReference type="RefSeq" id="NP_050826.1">
    <property type="nucleotide sequence ID" value="NC_000927.1"/>
</dbReference>
<dbReference type="SMR" id="Q9TL19"/>
<dbReference type="GeneID" id="801998"/>
<dbReference type="GO" id="GO:0009507">
    <property type="term" value="C:chloroplast"/>
    <property type="evidence" value="ECO:0007669"/>
    <property type="project" value="UniProtKB-SubCell"/>
</dbReference>
<dbReference type="GO" id="GO:0005763">
    <property type="term" value="C:mitochondrial small ribosomal subunit"/>
    <property type="evidence" value="ECO:0007669"/>
    <property type="project" value="TreeGrafter"/>
</dbReference>
<dbReference type="GO" id="GO:0019843">
    <property type="term" value="F:rRNA binding"/>
    <property type="evidence" value="ECO:0007669"/>
    <property type="project" value="UniProtKB-UniRule"/>
</dbReference>
<dbReference type="GO" id="GO:0003735">
    <property type="term" value="F:structural constituent of ribosome"/>
    <property type="evidence" value="ECO:0007669"/>
    <property type="project" value="InterPro"/>
</dbReference>
<dbReference type="GO" id="GO:0000028">
    <property type="term" value="P:ribosomal small subunit assembly"/>
    <property type="evidence" value="ECO:0007669"/>
    <property type="project" value="TreeGrafter"/>
</dbReference>
<dbReference type="GO" id="GO:0006412">
    <property type="term" value="P:translation"/>
    <property type="evidence" value="ECO:0007669"/>
    <property type="project" value="UniProtKB-UniRule"/>
</dbReference>
<dbReference type="FunFam" id="3.30.860.10:FF:000001">
    <property type="entry name" value="30S ribosomal protein S19"/>
    <property type="match status" value="1"/>
</dbReference>
<dbReference type="Gene3D" id="3.30.860.10">
    <property type="entry name" value="30s Ribosomal Protein S19, Chain A"/>
    <property type="match status" value="1"/>
</dbReference>
<dbReference type="HAMAP" id="MF_00531">
    <property type="entry name" value="Ribosomal_uS19"/>
    <property type="match status" value="1"/>
</dbReference>
<dbReference type="InterPro" id="IPR002222">
    <property type="entry name" value="Ribosomal_uS19"/>
</dbReference>
<dbReference type="InterPro" id="IPR005732">
    <property type="entry name" value="Ribosomal_uS19_bac-type"/>
</dbReference>
<dbReference type="InterPro" id="IPR020934">
    <property type="entry name" value="Ribosomal_uS19_CS"/>
</dbReference>
<dbReference type="InterPro" id="IPR023575">
    <property type="entry name" value="Ribosomal_uS19_SF"/>
</dbReference>
<dbReference type="NCBIfam" id="TIGR01050">
    <property type="entry name" value="rpsS_bact"/>
    <property type="match status" value="1"/>
</dbReference>
<dbReference type="PANTHER" id="PTHR11880">
    <property type="entry name" value="RIBOSOMAL PROTEIN S19P FAMILY MEMBER"/>
    <property type="match status" value="1"/>
</dbReference>
<dbReference type="PANTHER" id="PTHR11880:SF8">
    <property type="entry name" value="SMALL RIBOSOMAL SUBUNIT PROTEIN US19M"/>
    <property type="match status" value="1"/>
</dbReference>
<dbReference type="Pfam" id="PF00203">
    <property type="entry name" value="Ribosomal_S19"/>
    <property type="match status" value="1"/>
</dbReference>
<dbReference type="PIRSF" id="PIRSF002144">
    <property type="entry name" value="Ribosomal_S19"/>
    <property type="match status" value="1"/>
</dbReference>
<dbReference type="PRINTS" id="PR00975">
    <property type="entry name" value="RIBOSOMALS19"/>
</dbReference>
<dbReference type="SUPFAM" id="SSF54570">
    <property type="entry name" value="Ribosomal protein S19"/>
    <property type="match status" value="1"/>
</dbReference>
<dbReference type="PROSITE" id="PS00323">
    <property type="entry name" value="RIBOSOMAL_S19"/>
    <property type="match status" value="1"/>
</dbReference>
<accession>Q9TL19</accession>
<reference key="1">
    <citation type="journal article" date="1999" name="Proc. Natl. Acad. Sci. U.S.A.">
        <title>The complete chloroplast DNA sequence of the green alga Nephroselmis olivacea: insights into the architecture of ancestral chloroplast genomes.</title>
        <authorList>
            <person name="Turmel M."/>
            <person name="Otis C."/>
            <person name="Lemieux C."/>
        </authorList>
    </citation>
    <scope>NUCLEOTIDE SEQUENCE [LARGE SCALE GENOMIC DNA]</scope>
    <source>
        <strain>NIES-484 / S-N-5-8</strain>
    </source>
</reference>
<organism>
    <name type="scientific">Nephroselmis olivacea</name>
    <name type="common">Green alga</name>
    <dbReference type="NCBI Taxonomy" id="31312"/>
    <lineage>
        <taxon>Eukaryota</taxon>
        <taxon>Viridiplantae</taxon>
        <taxon>Chlorophyta</taxon>
        <taxon>Nephroselmidophyceae</taxon>
        <taxon>Nephroselmidales</taxon>
        <taxon>Nephroselmidaceae</taxon>
        <taxon>Nephroselmis</taxon>
    </lineage>
</organism>